<evidence type="ECO:0000255" key="1">
    <source>
        <dbReference type="HAMAP-Rule" id="MF_00473"/>
    </source>
</evidence>
<evidence type="ECO:0000305" key="2"/>
<organism>
    <name type="scientific">Haemophilus influenzae (strain 86-028NP)</name>
    <dbReference type="NCBI Taxonomy" id="281310"/>
    <lineage>
        <taxon>Bacteria</taxon>
        <taxon>Pseudomonadati</taxon>
        <taxon>Pseudomonadota</taxon>
        <taxon>Gammaproteobacteria</taxon>
        <taxon>Pasteurellales</taxon>
        <taxon>Pasteurellaceae</taxon>
        <taxon>Haemophilus</taxon>
    </lineage>
</organism>
<comment type="function">
    <text evidence="1">Catalyzes the reversible isomerization of glucose-6-phosphate to fructose-6-phosphate.</text>
</comment>
<comment type="catalytic activity">
    <reaction evidence="1">
        <text>alpha-D-glucose 6-phosphate = beta-D-fructose 6-phosphate</text>
        <dbReference type="Rhea" id="RHEA:11816"/>
        <dbReference type="ChEBI" id="CHEBI:57634"/>
        <dbReference type="ChEBI" id="CHEBI:58225"/>
        <dbReference type="EC" id="5.3.1.9"/>
    </reaction>
</comment>
<comment type="pathway">
    <text evidence="1">Carbohydrate biosynthesis; gluconeogenesis.</text>
</comment>
<comment type="pathway">
    <text evidence="1">Carbohydrate degradation; glycolysis; D-glyceraldehyde 3-phosphate and glycerone phosphate from D-glucose: step 2/4.</text>
</comment>
<comment type="subcellular location">
    <subcellularLocation>
        <location evidence="1">Cytoplasm</location>
    </subcellularLocation>
</comment>
<comment type="similarity">
    <text evidence="1">Belongs to the GPI family.</text>
</comment>
<comment type="sequence caution" evidence="2">
    <conflict type="erroneous initiation">
        <sequence resource="EMBL-CDS" id="AAX88290"/>
    </conflict>
</comment>
<proteinExistence type="inferred from homology"/>
<gene>
    <name evidence="1" type="primary">pgi</name>
    <name type="ordered locus">NTHI1475</name>
</gene>
<protein>
    <recommendedName>
        <fullName evidence="1">Glucose-6-phosphate isomerase</fullName>
        <shortName evidence="1">GPI</shortName>
        <ecNumber evidence="1">5.3.1.9</ecNumber>
    </recommendedName>
    <alternativeName>
        <fullName evidence="1">Phosphoglucose isomerase</fullName>
        <shortName evidence="1">PGI</shortName>
    </alternativeName>
    <alternativeName>
        <fullName evidence="1">Phosphohexose isomerase</fullName>
        <shortName evidence="1">PHI</shortName>
    </alternativeName>
</protein>
<feature type="chain" id="PRO_0000180651" description="Glucose-6-phosphate isomerase">
    <location>
        <begin position="1"/>
        <end position="549"/>
    </location>
</feature>
<feature type="active site" description="Proton donor" evidence="1">
    <location>
        <position position="355"/>
    </location>
</feature>
<feature type="active site" evidence="1">
    <location>
        <position position="387"/>
    </location>
</feature>
<feature type="active site" evidence="1">
    <location>
        <position position="515"/>
    </location>
</feature>
<reference key="1">
    <citation type="journal article" date="2005" name="J. Bacteriol.">
        <title>Genomic sequence of an otitis media isolate of nontypeable Haemophilus influenzae: comparative study with H. influenzae serotype d, strain KW20.</title>
        <authorList>
            <person name="Harrison A."/>
            <person name="Dyer D.W."/>
            <person name="Gillaspy A."/>
            <person name="Ray W.C."/>
            <person name="Mungur R."/>
            <person name="Carson M.B."/>
            <person name="Zhong H."/>
            <person name="Gipson J."/>
            <person name="Gipson M."/>
            <person name="Johnson L.S."/>
            <person name="Lewis L."/>
            <person name="Bakaletz L.O."/>
            <person name="Munson R.S. Jr."/>
        </authorList>
    </citation>
    <scope>NUCLEOTIDE SEQUENCE [LARGE SCALE GENOMIC DNA]</scope>
    <source>
        <strain>86-028NP</strain>
    </source>
</reference>
<accession>Q4QL07</accession>
<name>G6PI_HAEI8</name>
<sequence length="549" mass="61561">MKNINPTHTQAWKSLEAHKAELSNTTIQDLFKQEKNRFDDYSLTFNNQILVDFSKNNINQTTLSHLRQLAQECALDSAKEAMFTGEKINRTENRAVLHTALRNRTNTPVLVDGKDVMPEVNAVLAKMKDFCQRIISGEWKGYTGKAITDVVNIGIGGSDLGPYMVTEALRPYKNHLNMHFVSNVDGTHIAETLKKVNPETTLFLVASKTFTTQETMTNAQSARDWLLKAAKDESAVAKHFAALSTNAKDVEKFGIDTNNMFEFWDWVGGRYSLWSAIGLSIALSIGFENFEALLNGAHEMDKHFRTTPIEKNIPTTLALVGLWNTNFLGAQTEAILPYDQYLHRFAAYFQQGNMESNGKYVDRDGNVINNYQTGPIIWGEPGTNGQHAFYQLIHQGTTLIPCDFIAPAQSHNPLADHHNKLLSNFFAQTEALAFGKTKEEVEAEFVKAGKSLDDVKNIVPFKVFTGNKPTNSILVQKITPFTLGALIAMYEHKIFVQGVIFNIFSFDQWGVELGKQLANRILPELTDSEKVASHDSSTNGLINQFKAWR</sequence>
<dbReference type="EC" id="5.3.1.9" evidence="1"/>
<dbReference type="EMBL" id="CP000057">
    <property type="protein sequence ID" value="AAX88290.1"/>
    <property type="status" value="ALT_INIT"/>
    <property type="molecule type" value="Genomic_DNA"/>
</dbReference>
<dbReference type="RefSeq" id="WP_011272485.1">
    <property type="nucleotide sequence ID" value="NC_007146.2"/>
</dbReference>
<dbReference type="SMR" id="Q4QL07"/>
<dbReference type="KEGG" id="hit:NTHI1475"/>
<dbReference type="HOGENOM" id="CLU_017947_3_1_6"/>
<dbReference type="UniPathway" id="UPA00109">
    <property type="reaction ID" value="UER00181"/>
</dbReference>
<dbReference type="UniPathway" id="UPA00138"/>
<dbReference type="Proteomes" id="UP000002525">
    <property type="component" value="Chromosome"/>
</dbReference>
<dbReference type="GO" id="GO:0005829">
    <property type="term" value="C:cytosol"/>
    <property type="evidence" value="ECO:0007669"/>
    <property type="project" value="TreeGrafter"/>
</dbReference>
<dbReference type="GO" id="GO:0097367">
    <property type="term" value="F:carbohydrate derivative binding"/>
    <property type="evidence" value="ECO:0007669"/>
    <property type="project" value="InterPro"/>
</dbReference>
<dbReference type="GO" id="GO:0004347">
    <property type="term" value="F:glucose-6-phosphate isomerase activity"/>
    <property type="evidence" value="ECO:0007669"/>
    <property type="project" value="UniProtKB-UniRule"/>
</dbReference>
<dbReference type="GO" id="GO:0048029">
    <property type="term" value="F:monosaccharide binding"/>
    <property type="evidence" value="ECO:0007669"/>
    <property type="project" value="TreeGrafter"/>
</dbReference>
<dbReference type="GO" id="GO:0006094">
    <property type="term" value="P:gluconeogenesis"/>
    <property type="evidence" value="ECO:0007669"/>
    <property type="project" value="UniProtKB-UniRule"/>
</dbReference>
<dbReference type="GO" id="GO:0051156">
    <property type="term" value="P:glucose 6-phosphate metabolic process"/>
    <property type="evidence" value="ECO:0007669"/>
    <property type="project" value="TreeGrafter"/>
</dbReference>
<dbReference type="GO" id="GO:0006096">
    <property type="term" value="P:glycolytic process"/>
    <property type="evidence" value="ECO:0007669"/>
    <property type="project" value="UniProtKB-UniRule"/>
</dbReference>
<dbReference type="CDD" id="cd05015">
    <property type="entry name" value="SIS_PGI_1"/>
    <property type="match status" value="1"/>
</dbReference>
<dbReference type="CDD" id="cd05016">
    <property type="entry name" value="SIS_PGI_2"/>
    <property type="match status" value="1"/>
</dbReference>
<dbReference type="FunFam" id="1.10.1390.10:FF:000001">
    <property type="entry name" value="Glucose-6-phosphate isomerase"/>
    <property type="match status" value="1"/>
</dbReference>
<dbReference type="FunFam" id="3.40.50.10490:FF:000004">
    <property type="entry name" value="Glucose-6-phosphate isomerase"/>
    <property type="match status" value="1"/>
</dbReference>
<dbReference type="Gene3D" id="1.10.1390.10">
    <property type="match status" value="1"/>
</dbReference>
<dbReference type="Gene3D" id="3.40.50.10490">
    <property type="entry name" value="Glucose-6-phosphate isomerase like protein, domain 1"/>
    <property type="match status" value="2"/>
</dbReference>
<dbReference type="HAMAP" id="MF_00473">
    <property type="entry name" value="G6P_isomerase"/>
    <property type="match status" value="1"/>
</dbReference>
<dbReference type="InterPro" id="IPR001672">
    <property type="entry name" value="G6P_Isomerase"/>
</dbReference>
<dbReference type="InterPro" id="IPR023096">
    <property type="entry name" value="G6P_Isomerase_C"/>
</dbReference>
<dbReference type="InterPro" id="IPR018189">
    <property type="entry name" value="Phosphoglucose_isomerase_CS"/>
</dbReference>
<dbReference type="InterPro" id="IPR046348">
    <property type="entry name" value="SIS_dom_sf"/>
</dbReference>
<dbReference type="InterPro" id="IPR035476">
    <property type="entry name" value="SIS_PGI_1"/>
</dbReference>
<dbReference type="InterPro" id="IPR035482">
    <property type="entry name" value="SIS_PGI_2"/>
</dbReference>
<dbReference type="NCBIfam" id="NF001211">
    <property type="entry name" value="PRK00179.1"/>
    <property type="match status" value="1"/>
</dbReference>
<dbReference type="PANTHER" id="PTHR11469">
    <property type="entry name" value="GLUCOSE-6-PHOSPHATE ISOMERASE"/>
    <property type="match status" value="1"/>
</dbReference>
<dbReference type="PANTHER" id="PTHR11469:SF1">
    <property type="entry name" value="GLUCOSE-6-PHOSPHATE ISOMERASE"/>
    <property type="match status" value="1"/>
</dbReference>
<dbReference type="Pfam" id="PF00342">
    <property type="entry name" value="PGI"/>
    <property type="match status" value="1"/>
</dbReference>
<dbReference type="PRINTS" id="PR00662">
    <property type="entry name" value="G6PISOMERASE"/>
</dbReference>
<dbReference type="SUPFAM" id="SSF53697">
    <property type="entry name" value="SIS domain"/>
    <property type="match status" value="1"/>
</dbReference>
<dbReference type="PROSITE" id="PS00765">
    <property type="entry name" value="P_GLUCOSE_ISOMERASE_1"/>
    <property type="match status" value="1"/>
</dbReference>
<dbReference type="PROSITE" id="PS00174">
    <property type="entry name" value="P_GLUCOSE_ISOMERASE_2"/>
    <property type="match status" value="1"/>
</dbReference>
<dbReference type="PROSITE" id="PS51463">
    <property type="entry name" value="P_GLUCOSE_ISOMERASE_3"/>
    <property type="match status" value="1"/>
</dbReference>
<keyword id="KW-0963">Cytoplasm</keyword>
<keyword id="KW-0312">Gluconeogenesis</keyword>
<keyword id="KW-0324">Glycolysis</keyword>
<keyword id="KW-0413">Isomerase</keyword>